<dbReference type="EC" id="1.1.1.86" evidence="1"/>
<dbReference type="EMBL" id="BX248583">
    <property type="protein sequence ID" value="CAD83266.1"/>
    <property type="molecule type" value="Genomic_DNA"/>
</dbReference>
<dbReference type="SMR" id="Q7VRM0"/>
<dbReference type="STRING" id="203907.Bfl588"/>
<dbReference type="KEGG" id="bfl:Bfl588"/>
<dbReference type="eggNOG" id="COG0059">
    <property type="taxonomic scope" value="Bacteria"/>
</dbReference>
<dbReference type="HOGENOM" id="CLU_551905_0_0_6"/>
<dbReference type="OrthoDB" id="9804088at2"/>
<dbReference type="UniPathway" id="UPA00047">
    <property type="reaction ID" value="UER00056"/>
</dbReference>
<dbReference type="UniPathway" id="UPA00049">
    <property type="reaction ID" value="UER00060"/>
</dbReference>
<dbReference type="Proteomes" id="UP000002192">
    <property type="component" value="Chromosome"/>
</dbReference>
<dbReference type="GO" id="GO:0005829">
    <property type="term" value="C:cytosol"/>
    <property type="evidence" value="ECO:0007669"/>
    <property type="project" value="TreeGrafter"/>
</dbReference>
<dbReference type="GO" id="GO:0004455">
    <property type="term" value="F:ketol-acid reductoisomerase activity"/>
    <property type="evidence" value="ECO:0007669"/>
    <property type="project" value="UniProtKB-UniRule"/>
</dbReference>
<dbReference type="GO" id="GO:0000287">
    <property type="term" value="F:magnesium ion binding"/>
    <property type="evidence" value="ECO:0007669"/>
    <property type="project" value="UniProtKB-UniRule"/>
</dbReference>
<dbReference type="GO" id="GO:0009097">
    <property type="term" value="P:isoleucine biosynthetic process"/>
    <property type="evidence" value="ECO:0007669"/>
    <property type="project" value="UniProtKB-UniRule"/>
</dbReference>
<dbReference type="GO" id="GO:0009099">
    <property type="term" value="P:L-valine biosynthetic process"/>
    <property type="evidence" value="ECO:0007669"/>
    <property type="project" value="UniProtKB-UniRule"/>
</dbReference>
<dbReference type="Gene3D" id="1.10.1040.10">
    <property type="entry name" value="N-(1-d-carboxylethyl)-l-norvaline Dehydrogenase, domain 2"/>
    <property type="match status" value="1"/>
</dbReference>
<dbReference type="Gene3D" id="3.40.50.720">
    <property type="entry name" value="NAD(P)-binding Rossmann-like Domain"/>
    <property type="match status" value="1"/>
</dbReference>
<dbReference type="HAMAP" id="MF_00435">
    <property type="entry name" value="IlvC"/>
    <property type="match status" value="1"/>
</dbReference>
<dbReference type="InterPro" id="IPR008927">
    <property type="entry name" value="6-PGluconate_DH-like_C_sf"/>
</dbReference>
<dbReference type="InterPro" id="IPR013328">
    <property type="entry name" value="6PGD_dom2"/>
</dbReference>
<dbReference type="InterPro" id="IPR013023">
    <property type="entry name" value="KARI"/>
</dbReference>
<dbReference type="InterPro" id="IPR000506">
    <property type="entry name" value="KARI_C"/>
</dbReference>
<dbReference type="InterPro" id="IPR013116">
    <property type="entry name" value="KARI_N"/>
</dbReference>
<dbReference type="InterPro" id="IPR036291">
    <property type="entry name" value="NAD(P)-bd_dom_sf"/>
</dbReference>
<dbReference type="NCBIfam" id="TIGR00465">
    <property type="entry name" value="ilvC"/>
    <property type="match status" value="1"/>
</dbReference>
<dbReference type="NCBIfam" id="NF003557">
    <property type="entry name" value="PRK05225.1"/>
    <property type="match status" value="1"/>
</dbReference>
<dbReference type="PANTHER" id="PTHR21371">
    <property type="entry name" value="KETOL-ACID REDUCTOISOMERASE, MITOCHONDRIAL"/>
    <property type="match status" value="1"/>
</dbReference>
<dbReference type="PANTHER" id="PTHR21371:SF1">
    <property type="entry name" value="KETOL-ACID REDUCTOISOMERASE, MITOCHONDRIAL"/>
    <property type="match status" value="1"/>
</dbReference>
<dbReference type="Pfam" id="PF01450">
    <property type="entry name" value="KARI_C"/>
    <property type="match status" value="2"/>
</dbReference>
<dbReference type="Pfam" id="PF07991">
    <property type="entry name" value="KARI_N"/>
    <property type="match status" value="1"/>
</dbReference>
<dbReference type="SUPFAM" id="SSF48179">
    <property type="entry name" value="6-phosphogluconate dehydrogenase C-terminal domain-like"/>
    <property type="match status" value="2"/>
</dbReference>
<dbReference type="SUPFAM" id="SSF51735">
    <property type="entry name" value="NAD(P)-binding Rossmann-fold domains"/>
    <property type="match status" value="1"/>
</dbReference>
<dbReference type="PROSITE" id="PS51851">
    <property type="entry name" value="KARI_C"/>
    <property type="match status" value="2"/>
</dbReference>
<dbReference type="PROSITE" id="PS51850">
    <property type="entry name" value="KARI_N"/>
    <property type="match status" value="1"/>
</dbReference>
<protein>
    <recommendedName>
        <fullName evidence="1">Ketol-acid reductoisomerase (NADP(+))</fullName>
        <shortName evidence="1">KARI</shortName>
        <ecNumber evidence="1">1.1.1.86</ecNumber>
    </recommendedName>
    <alternativeName>
        <fullName evidence="1">Acetohydroxy-acid isomeroreductase</fullName>
        <shortName evidence="1">AHIR</shortName>
    </alternativeName>
    <alternativeName>
        <fullName evidence="1">Alpha-keto-beta-hydroxylacyl reductoisomerase</fullName>
    </alternativeName>
    <alternativeName>
        <fullName evidence="1">Ketol-acid reductoisomerase type 2</fullName>
    </alternativeName>
    <alternativeName>
        <fullName evidence="1">Ketol-acid reductoisomerase type II</fullName>
    </alternativeName>
</protein>
<feature type="chain" id="PRO_0000151298" description="Ketol-acid reductoisomerase (NADP(+))">
    <location>
        <begin position="1"/>
        <end position="492"/>
    </location>
</feature>
<feature type="domain" description="KARI N-terminal Rossmann" evidence="2">
    <location>
        <begin position="17"/>
        <end position="208"/>
    </location>
</feature>
<feature type="domain" description="KARI C-terminal knotted 1" evidence="3">
    <location>
        <begin position="209"/>
        <end position="344"/>
    </location>
</feature>
<feature type="domain" description="KARI C-terminal knotted 2" evidence="3">
    <location>
        <begin position="345"/>
        <end position="487"/>
    </location>
</feature>
<feature type="active site" evidence="1">
    <location>
        <position position="132"/>
    </location>
</feature>
<feature type="binding site" evidence="1">
    <location>
        <begin position="45"/>
        <end position="48"/>
    </location>
    <ligand>
        <name>NADP(+)</name>
        <dbReference type="ChEBI" id="CHEBI:58349"/>
    </ligand>
</feature>
<feature type="binding site" evidence="1">
    <location>
        <position position="68"/>
    </location>
    <ligand>
        <name>NADP(+)</name>
        <dbReference type="ChEBI" id="CHEBI:58349"/>
    </ligand>
</feature>
<feature type="binding site" evidence="1">
    <location>
        <position position="76"/>
    </location>
    <ligand>
        <name>NADP(+)</name>
        <dbReference type="ChEBI" id="CHEBI:58349"/>
    </ligand>
</feature>
<feature type="binding site" evidence="1">
    <location>
        <position position="78"/>
    </location>
    <ligand>
        <name>NADP(+)</name>
        <dbReference type="ChEBI" id="CHEBI:58349"/>
    </ligand>
</feature>
<feature type="binding site" evidence="1">
    <location>
        <position position="158"/>
    </location>
    <ligand>
        <name>NADP(+)</name>
        <dbReference type="ChEBI" id="CHEBI:58349"/>
    </ligand>
</feature>
<feature type="binding site" evidence="1">
    <location>
        <position position="217"/>
    </location>
    <ligand>
        <name>Mg(2+)</name>
        <dbReference type="ChEBI" id="CHEBI:18420"/>
        <label>1</label>
    </ligand>
</feature>
<feature type="binding site" evidence="1">
    <location>
        <position position="217"/>
    </location>
    <ligand>
        <name>Mg(2+)</name>
        <dbReference type="ChEBI" id="CHEBI:18420"/>
        <label>2</label>
    </ligand>
</feature>
<feature type="binding site" evidence="1">
    <location>
        <position position="221"/>
    </location>
    <ligand>
        <name>Mg(2+)</name>
        <dbReference type="ChEBI" id="CHEBI:18420"/>
        <label>1</label>
    </ligand>
</feature>
<feature type="binding site" evidence="1">
    <location>
        <position position="389"/>
    </location>
    <ligand>
        <name>Mg(2+)</name>
        <dbReference type="ChEBI" id="CHEBI:18420"/>
        <label>2</label>
    </ligand>
</feature>
<feature type="binding site" evidence="1">
    <location>
        <position position="393"/>
    </location>
    <ligand>
        <name>Mg(2+)</name>
        <dbReference type="ChEBI" id="CHEBI:18420"/>
        <label>2</label>
    </ligand>
</feature>
<feature type="binding site" evidence="1">
    <location>
        <position position="414"/>
    </location>
    <ligand>
        <name>substrate</name>
    </ligand>
</feature>
<accession>Q7VRM0</accession>
<reference key="1">
    <citation type="journal article" date="2003" name="Proc. Natl. Acad. Sci. U.S.A.">
        <title>The genome sequence of Blochmannia floridanus: comparative analysis of reduced genomes.</title>
        <authorList>
            <person name="Gil R."/>
            <person name="Silva F.J."/>
            <person name="Zientz E."/>
            <person name="Delmotte F."/>
            <person name="Gonzalez-Candelas F."/>
            <person name="Latorre A."/>
            <person name="Rausell C."/>
            <person name="Kamerbeek J."/>
            <person name="Gadau J."/>
            <person name="Hoelldobler B."/>
            <person name="van Ham R.C.H.J."/>
            <person name="Gross R."/>
            <person name="Moya A."/>
        </authorList>
    </citation>
    <scope>NUCLEOTIDE SEQUENCE [LARGE SCALE GENOMIC DNA]</scope>
</reference>
<gene>
    <name evidence="1" type="primary">ilvC</name>
    <name type="ordered locus">Bfl588</name>
</gene>
<proteinExistence type="inferred from homology"/>
<name>ILVC_BLOFL</name>
<keyword id="KW-0028">Amino-acid biosynthesis</keyword>
<keyword id="KW-0100">Branched-chain amino acid biosynthesis</keyword>
<keyword id="KW-0460">Magnesium</keyword>
<keyword id="KW-0479">Metal-binding</keyword>
<keyword id="KW-0521">NADP</keyword>
<keyword id="KW-0560">Oxidoreductase</keyword>
<keyword id="KW-1185">Reference proteome</keyword>
<keyword id="KW-0677">Repeat</keyword>
<comment type="function">
    <text evidence="1">Involved in the biosynthesis of branched-chain amino acids (BCAA). Catalyzes an alkyl-migration followed by a ketol-acid reduction of (S)-2-acetolactate (S2AL) to yield (R)-2,3-dihydroxy-isovalerate. In the isomerase reaction, S2AL is rearranged via a Mg-dependent methyl migration to produce 3-hydroxy-3-methyl-2-ketobutyrate (HMKB). In the reductase reaction, this 2-ketoacid undergoes a metal-dependent reduction by NADPH to yield (R)-2,3-dihydroxy-isovalerate.</text>
</comment>
<comment type="catalytic activity">
    <reaction evidence="1">
        <text>(2R)-2,3-dihydroxy-3-methylbutanoate + NADP(+) = (2S)-2-acetolactate + NADPH + H(+)</text>
        <dbReference type="Rhea" id="RHEA:22068"/>
        <dbReference type="ChEBI" id="CHEBI:15378"/>
        <dbReference type="ChEBI" id="CHEBI:49072"/>
        <dbReference type="ChEBI" id="CHEBI:57783"/>
        <dbReference type="ChEBI" id="CHEBI:58349"/>
        <dbReference type="ChEBI" id="CHEBI:58476"/>
        <dbReference type="EC" id="1.1.1.86"/>
    </reaction>
</comment>
<comment type="catalytic activity">
    <reaction evidence="1">
        <text>(2R,3R)-2,3-dihydroxy-3-methylpentanoate + NADP(+) = (S)-2-ethyl-2-hydroxy-3-oxobutanoate + NADPH + H(+)</text>
        <dbReference type="Rhea" id="RHEA:13493"/>
        <dbReference type="ChEBI" id="CHEBI:15378"/>
        <dbReference type="ChEBI" id="CHEBI:49256"/>
        <dbReference type="ChEBI" id="CHEBI:49258"/>
        <dbReference type="ChEBI" id="CHEBI:57783"/>
        <dbReference type="ChEBI" id="CHEBI:58349"/>
        <dbReference type="EC" id="1.1.1.86"/>
    </reaction>
</comment>
<comment type="cofactor">
    <cofactor evidence="1">
        <name>Mg(2+)</name>
        <dbReference type="ChEBI" id="CHEBI:18420"/>
    </cofactor>
    <text evidence="1">Binds 2 magnesium ions per subunit.</text>
</comment>
<comment type="pathway">
    <text evidence="1">Amino-acid biosynthesis; L-isoleucine biosynthesis; L-isoleucine from 2-oxobutanoate: step 2/4.</text>
</comment>
<comment type="pathway">
    <text evidence="1">Amino-acid biosynthesis; L-valine biosynthesis; L-valine from pyruvate: step 2/4.</text>
</comment>
<comment type="similarity">
    <text evidence="1">Belongs to the ketol-acid reductoisomerase family.</text>
</comment>
<evidence type="ECO:0000255" key="1">
    <source>
        <dbReference type="HAMAP-Rule" id="MF_00435"/>
    </source>
</evidence>
<evidence type="ECO:0000255" key="2">
    <source>
        <dbReference type="PROSITE-ProRule" id="PRU01197"/>
    </source>
</evidence>
<evidence type="ECO:0000255" key="3">
    <source>
        <dbReference type="PROSITE-ProRule" id="PRU01198"/>
    </source>
</evidence>
<organism>
    <name type="scientific">Blochmanniella floridana</name>
    <dbReference type="NCBI Taxonomy" id="203907"/>
    <lineage>
        <taxon>Bacteria</taxon>
        <taxon>Pseudomonadati</taxon>
        <taxon>Pseudomonadota</taxon>
        <taxon>Gammaproteobacteria</taxon>
        <taxon>Enterobacterales</taxon>
        <taxon>Enterobacteriaceae</taxon>
        <taxon>ant endosymbionts</taxon>
        <taxon>Candidatus Blochmanniella</taxon>
    </lineage>
</organism>
<sequence>MNNYFNKLTFIQKIKHLGQCRLMKKNEFSDGVRALLSKKIVIIGCGSQGLNQGLNMRDSGLNITYALRRDSIINQSQSYIRAMKYGFSVGTYDELIPEADFVINLIPDKYHESLIQKIEPLMKYKAVLGYSHGFHIVEIGVKIRQDITVIMVAPKCPGTEVRQEYQRGFGVPALIAVHEENNAYGTGMELAKSWACSIGSNKAGVLESSFVAEVKSDLMGEQTVLCGMLQVGSIFCFDKMVEDGLDSGYAGKLVQNGWEVITEALKQGGITLMMDRLSNVSKLRAFELSDQLKNILTPVFEKHMEDILDGSFSKNMMLDWINKDCKLLSYRQNNSQLLFEKAPVYCETILEQTYFDHGVLMVAIIKASVELAFDIMVKSGIKPESAYYESLHELPLIANTIARKRLYEMNMVISDTAEYGNYLFSDFVLPLLKKEFVPYLKRGDLDLSHVNNIVHIDNILLRDINEMIRTHPIEKVGVQLRSYMKDMVSLSF</sequence>